<proteinExistence type="evidence at protein level"/>
<organism>
    <name type="scientific">Homo sapiens</name>
    <name type="common">Human</name>
    <dbReference type="NCBI Taxonomy" id="9606"/>
    <lineage>
        <taxon>Eukaryota</taxon>
        <taxon>Metazoa</taxon>
        <taxon>Chordata</taxon>
        <taxon>Craniata</taxon>
        <taxon>Vertebrata</taxon>
        <taxon>Euteleostomi</taxon>
        <taxon>Mammalia</taxon>
        <taxon>Eutheria</taxon>
        <taxon>Euarchontoglires</taxon>
        <taxon>Primates</taxon>
        <taxon>Haplorrhini</taxon>
        <taxon>Catarrhini</taxon>
        <taxon>Hominidae</taxon>
        <taxon>Homo</taxon>
    </lineage>
</organism>
<sequence>MWALRAAVRPGLRLSRVGRGRSAPRAAAPSCPARALAAVGRRSPGNLEGPWGGGRGLRADGGRSRTGDDEEEPEDADENAEEELLRGEPLLPAGTQRVCLVHPDVKWGPGKSQMTRAEWQVAEATALVHTLDGWSVVQTMVVSTKTPDRKLIFGKGNFEHLTEKIRGSPDITCVFLNVERMAAPTKKELEAAWGVEVFDRFTVVLHIFRCNARTKEARLQVALAEMPLHRSNLKRDVAHLYRGVGSRYIMGSGESFMQLQQRLLREKEAKIRKALDRLRKKRHLLRRQRTRREFPVISVVGYTNCGKTTLIKALTGDAAIQPRDQLFATLDVTAHAGTLPSRMTVLYVDTIGFLSQLPHGLIESFSATLEDVAHSDLILHVRDVSHPEAELQKCSVLSTLRGLQLPAPLLDSMVEVHNKVDLVPGYSPTEPNVVPVSALRGHGLQELKAELDAAVLKATGRQILTLRVRLAGAQLSWLYKEATVQEVDVIPEDGAADVRVIISNSAYGKFRKLFPG</sequence>
<reference key="1">
    <citation type="journal article" date="2005" name="Nature">
        <title>The DNA sequence of the human X chromosome.</title>
        <authorList>
            <person name="Ross M.T."/>
            <person name="Grafham D.V."/>
            <person name="Coffey A.J."/>
            <person name="Scherer S."/>
            <person name="McLay K."/>
            <person name="Muzny D."/>
            <person name="Platzer M."/>
            <person name="Howell G.R."/>
            <person name="Burrows C."/>
            <person name="Bird C.P."/>
            <person name="Frankish A."/>
            <person name="Lovell F.L."/>
            <person name="Howe K.L."/>
            <person name="Ashurst J.L."/>
            <person name="Fulton R.S."/>
            <person name="Sudbrak R."/>
            <person name="Wen G."/>
            <person name="Jones M.C."/>
            <person name="Hurles M.E."/>
            <person name="Andrews T.D."/>
            <person name="Scott C.E."/>
            <person name="Searle S."/>
            <person name="Ramser J."/>
            <person name="Whittaker A."/>
            <person name="Deadman R."/>
            <person name="Carter N.P."/>
            <person name="Hunt S.E."/>
            <person name="Chen R."/>
            <person name="Cree A."/>
            <person name="Gunaratne P."/>
            <person name="Havlak P."/>
            <person name="Hodgson A."/>
            <person name="Metzker M.L."/>
            <person name="Richards S."/>
            <person name="Scott G."/>
            <person name="Steffen D."/>
            <person name="Sodergren E."/>
            <person name="Wheeler D.A."/>
            <person name="Worley K.C."/>
            <person name="Ainscough R."/>
            <person name="Ambrose K.D."/>
            <person name="Ansari-Lari M.A."/>
            <person name="Aradhya S."/>
            <person name="Ashwell R.I."/>
            <person name="Babbage A.K."/>
            <person name="Bagguley C.L."/>
            <person name="Ballabio A."/>
            <person name="Banerjee R."/>
            <person name="Barker G.E."/>
            <person name="Barlow K.F."/>
            <person name="Barrett I.P."/>
            <person name="Bates K.N."/>
            <person name="Beare D.M."/>
            <person name="Beasley H."/>
            <person name="Beasley O."/>
            <person name="Beck A."/>
            <person name="Bethel G."/>
            <person name="Blechschmidt K."/>
            <person name="Brady N."/>
            <person name="Bray-Allen S."/>
            <person name="Bridgeman A.M."/>
            <person name="Brown A.J."/>
            <person name="Brown M.J."/>
            <person name="Bonnin D."/>
            <person name="Bruford E.A."/>
            <person name="Buhay C."/>
            <person name="Burch P."/>
            <person name="Burford D."/>
            <person name="Burgess J."/>
            <person name="Burrill W."/>
            <person name="Burton J."/>
            <person name="Bye J.M."/>
            <person name="Carder C."/>
            <person name="Carrel L."/>
            <person name="Chako J."/>
            <person name="Chapman J.C."/>
            <person name="Chavez D."/>
            <person name="Chen E."/>
            <person name="Chen G."/>
            <person name="Chen Y."/>
            <person name="Chen Z."/>
            <person name="Chinault C."/>
            <person name="Ciccodicola A."/>
            <person name="Clark S.Y."/>
            <person name="Clarke G."/>
            <person name="Clee C.M."/>
            <person name="Clegg S."/>
            <person name="Clerc-Blankenburg K."/>
            <person name="Clifford K."/>
            <person name="Cobley V."/>
            <person name="Cole C.G."/>
            <person name="Conquer J.S."/>
            <person name="Corby N."/>
            <person name="Connor R.E."/>
            <person name="David R."/>
            <person name="Davies J."/>
            <person name="Davis C."/>
            <person name="Davis J."/>
            <person name="Delgado O."/>
            <person name="Deshazo D."/>
            <person name="Dhami P."/>
            <person name="Ding Y."/>
            <person name="Dinh H."/>
            <person name="Dodsworth S."/>
            <person name="Draper H."/>
            <person name="Dugan-Rocha S."/>
            <person name="Dunham A."/>
            <person name="Dunn M."/>
            <person name="Durbin K.J."/>
            <person name="Dutta I."/>
            <person name="Eades T."/>
            <person name="Ellwood M."/>
            <person name="Emery-Cohen A."/>
            <person name="Errington H."/>
            <person name="Evans K.L."/>
            <person name="Faulkner L."/>
            <person name="Francis F."/>
            <person name="Frankland J."/>
            <person name="Fraser A.E."/>
            <person name="Galgoczy P."/>
            <person name="Gilbert J."/>
            <person name="Gill R."/>
            <person name="Gloeckner G."/>
            <person name="Gregory S.G."/>
            <person name="Gribble S."/>
            <person name="Griffiths C."/>
            <person name="Grocock R."/>
            <person name="Gu Y."/>
            <person name="Gwilliam R."/>
            <person name="Hamilton C."/>
            <person name="Hart E.A."/>
            <person name="Hawes A."/>
            <person name="Heath P.D."/>
            <person name="Heitmann K."/>
            <person name="Hennig S."/>
            <person name="Hernandez J."/>
            <person name="Hinzmann B."/>
            <person name="Ho S."/>
            <person name="Hoffs M."/>
            <person name="Howden P.J."/>
            <person name="Huckle E.J."/>
            <person name="Hume J."/>
            <person name="Hunt P.J."/>
            <person name="Hunt A.R."/>
            <person name="Isherwood J."/>
            <person name="Jacob L."/>
            <person name="Johnson D."/>
            <person name="Jones S."/>
            <person name="de Jong P.J."/>
            <person name="Joseph S.S."/>
            <person name="Keenan S."/>
            <person name="Kelly S."/>
            <person name="Kershaw J.K."/>
            <person name="Khan Z."/>
            <person name="Kioschis P."/>
            <person name="Klages S."/>
            <person name="Knights A.J."/>
            <person name="Kosiura A."/>
            <person name="Kovar-Smith C."/>
            <person name="Laird G.K."/>
            <person name="Langford C."/>
            <person name="Lawlor S."/>
            <person name="Leversha M."/>
            <person name="Lewis L."/>
            <person name="Liu W."/>
            <person name="Lloyd C."/>
            <person name="Lloyd D.M."/>
            <person name="Loulseged H."/>
            <person name="Loveland J.E."/>
            <person name="Lovell J.D."/>
            <person name="Lozado R."/>
            <person name="Lu J."/>
            <person name="Lyne R."/>
            <person name="Ma J."/>
            <person name="Maheshwari M."/>
            <person name="Matthews L.H."/>
            <person name="McDowall J."/>
            <person name="McLaren S."/>
            <person name="McMurray A."/>
            <person name="Meidl P."/>
            <person name="Meitinger T."/>
            <person name="Milne S."/>
            <person name="Miner G."/>
            <person name="Mistry S.L."/>
            <person name="Morgan M."/>
            <person name="Morris S."/>
            <person name="Mueller I."/>
            <person name="Mullikin J.C."/>
            <person name="Nguyen N."/>
            <person name="Nordsiek G."/>
            <person name="Nyakatura G."/>
            <person name="O'dell C.N."/>
            <person name="Okwuonu G."/>
            <person name="Palmer S."/>
            <person name="Pandian R."/>
            <person name="Parker D."/>
            <person name="Parrish J."/>
            <person name="Pasternak S."/>
            <person name="Patel D."/>
            <person name="Pearce A.V."/>
            <person name="Pearson D.M."/>
            <person name="Pelan S.E."/>
            <person name="Perez L."/>
            <person name="Porter K.M."/>
            <person name="Ramsey Y."/>
            <person name="Reichwald K."/>
            <person name="Rhodes S."/>
            <person name="Ridler K.A."/>
            <person name="Schlessinger D."/>
            <person name="Schueler M.G."/>
            <person name="Sehra H.K."/>
            <person name="Shaw-Smith C."/>
            <person name="Shen H."/>
            <person name="Sheridan E.M."/>
            <person name="Shownkeen R."/>
            <person name="Skuce C.D."/>
            <person name="Smith M.L."/>
            <person name="Sotheran E.C."/>
            <person name="Steingruber H.E."/>
            <person name="Steward C.A."/>
            <person name="Storey R."/>
            <person name="Swann R.M."/>
            <person name="Swarbreck D."/>
            <person name="Tabor P.E."/>
            <person name="Taudien S."/>
            <person name="Taylor T."/>
            <person name="Teague B."/>
            <person name="Thomas K."/>
            <person name="Thorpe A."/>
            <person name="Timms K."/>
            <person name="Tracey A."/>
            <person name="Trevanion S."/>
            <person name="Tromans A.C."/>
            <person name="d'Urso M."/>
            <person name="Verduzco D."/>
            <person name="Villasana D."/>
            <person name="Waldron L."/>
            <person name="Wall M."/>
            <person name="Wang Q."/>
            <person name="Warren J."/>
            <person name="Warry G.L."/>
            <person name="Wei X."/>
            <person name="West A."/>
            <person name="Whitehead S.L."/>
            <person name="Whiteley M.N."/>
            <person name="Wilkinson J.E."/>
            <person name="Willey D.L."/>
            <person name="Williams G."/>
            <person name="Williams L."/>
            <person name="Williamson A."/>
            <person name="Williamson H."/>
            <person name="Wilming L."/>
            <person name="Woodmansey R.L."/>
            <person name="Wray P.W."/>
            <person name="Yen J."/>
            <person name="Zhang J."/>
            <person name="Zhou J."/>
            <person name="Zoghbi H."/>
            <person name="Zorilla S."/>
            <person name="Buck D."/>
            <person name="Reinhardt R."/>
            <person name="Poustka A."/>
            <person name="Rosenthal A."/>
            <person name="Lehrach H."/>
            <person name="Meindl A."/>
            <person name="Minx P.J."/>
            <person name="Hillier L.W."/>
            <person name="Willard H.F."/>
            <person name="Wilson R.K."/>
            <person name="Waterston R.H."/>
            <person name="Rice C.M."/>
            <person name="Vaudin M."/>
            <person name="Coulson A."/>
            <person name="Nelson D.L."/>
            <person name="Weinstock G."/>
            <person name="Sulston J.E."/>
            <person name="Durbin R.M."/>
            <person name="Hubbard T."/>
            <person name="Gibbs R.A."/>
            <person name="Beck S."/>
            <person name="Rogers J."/>
            <person name="Bentley D.R."/>
        </authorList>
    </citation>
    <scope>NUCLEOTIDE SEQUENCE [LARGE SCALE GENOMIC DNA]</scope>
</reference>
<reference key="2">
    <citation type="journal article" date="1998" name="Hum. Mol. Genet.">
        <title>A novel pseudoautosomal gene encoding a putative GTP-binding protein resides in the vicinity of the Xp/Yp telomere.</title>
        <authorList>
            <person name="Gianfrancesco F."/>
            <person name="Esposito T."/>
            <person name="Montanini L."/>
            <person name="Ciccodicola A."/>
            <person name="Mumm S."/>
            <person name="Mazzarella R."/>
            <person name="Rao E."/>
            <person name="Giglio S."/>
            <person name="Rappold G."/>
            <person name="Forabosco A."/>
        </authorList>
    </citation>
    <scope>NUCLEOTIDE SEQUENCE [MRNA] OF 6-516</scope>
    <scope>TISSUE SPECIFICITY</scope>
</reference>
<reference key="3">
    <citation type="submission" date="2005-04" db="EMBL/GenBank/DDBJ databases">
        <authorList>
            <person name="Totoki Y."/>
            <person name="Toyoda A."/>
            <person name="Takeda T."/>
            <person name="Sakaki Y."/>
            <person name="Tanaka A."/>
            <person name="Yokoyama S."/>
        </authorList>
    </citation>
    <scope>NUCLEOTIDE SEQUENCE [LARGE SCALE MRNA] OF 9-516</scope>
</reference>
<reference key="4">
    <citation type="journal article" date="2004" name="Genome Res.">
        <title>The status, quality, and expansion of the NIH full-length cDNA project: the Mammalian Gene Collection (MGC).</title>
        <authorList>
            <consortium name="The MGC Project Team"/>
        </authorList>
    </citation>
    <scope>NUCLEOTIDE SEQUENCE [LARGE SCALE MRNA] OF 100-516</scope>
    <source>
        <tissue>Muscle</tissue>
    </source>
</reference>
<reference key="5">
    <citation type="submission" date="2003-05" db="EMBL/GenBank/DDBJ databases">
        <title>Cloning of human full-length CDSs in BD Creator(TM) system donor vector.</title>
        <authorList>
            <person name="Kalnine N."/>
            <person name="Chen X."/>
            <person name="Rolfs A."/>
            <person name="Halleck A."/>
            <person name="Hines L."/>
            <person name="Eisenstein S."/>
            <person name="Koundinya M."/>
            <person name="Raphael J."/>
            <person name="Moreira D."/>
            <person name="Kelley T."/>
            <person name="LaBaer J."/>
            <person name="Lin Y."/>
            <person name="Phelan M."/>
            <person name="Farmer A."/>
        </authorList>
    </citation>
    <scope>NUCLEOTIDE SEQUENCE [LARGE SCALE MRNA] OF 114-516</scope>
</reference>
<evidence type="ECO:0000255" key="1">
    <source>
        <dbReference type="PROSITE-ProRule" id="PRU01042"/>
    </source>
</evidence>
<evidence type="ECO:0000256" key="2">
    <source>
        <dbReference type="SAM" id="MobiDB-lite"/>
    </source>
</evidence>
<evidence type="ECO:0000269" key="3">
    <source>
    </source>
</evidence>
<evidence type="ECO:0000305" key="4"/>
<comment type="cofactor">
    <cofactor evidence="1">
        <name>Mg(2+)</name>
        <dbReference type="ChEBI" id="CHEBI:18420"/>
    </cofactor>
</comment>
<comment type="tissue specificity">
    <text evidence="3">Ubiquitously expressed.</text>
</comment>
<comment type="miscellaneous">
    <text>The gene coding for this protein is located in the pseudoautosomal region 1 (PAR1) of X and Y chromosomes.</text>
</comment>
<comment type="similarity">
    <text evidence="1">Belongs to the TRAFAC class OBG-HflX-like GTPase superfamily. HflX GTPase family.</text>
</comment>
<comment type="sequence caution" evidence="4">
    <conflict type="erroneous initiation">
        <sequence resource="EMBL-CDS" id="AAH14636"/>
    </conflict>
    <text>Truncated N-terminus.</text>
</comment>
<comment type="sequence caution" evidence="4">
    <conflict type="erroneous initiation">
        <sequence resource="EMBL-CDS" id="BAD97132"/>
    </conflict>
    <text>Truncated N-terminus.</text>
</comment>
<comment type="sequence caution" evidence="4">
    <conflict type="frameshift">
        <sequence resource="EMBL-CDS" id="CAA74749"/>
    </conflict>
</comment>
<name>GTPB6_HUMAN</name>
<feature type="chain" id="PRO_0000304798" description="Putative GTP-binding protein 6">
    <location>
        <begin position="1"/>
        <end position="516"/>
    </location>
</feature>
<feature type="domain" description="Hflx-type G" evidence="1">
    <location>
        <begin position="295"/>
        <end position="459"/>
    </location>
</feature>
<feature type="region of interest" description="Disordered" evidence="2">
    <location>
        <begin position="18"/>
        <end position="82"/>
    </location>
</feature>
<feature type="compositionally biased region" description="Low complexity" evidence="2">
    <location>
        <begin position="18"/>
        <end position="39"/>
    </location>
</feature>
<feature type="compositionally biased region" description="Basic and acidic residues" evidence="2">
    <location>
        <begin position="57"/>
        <end position="67"/>
    </location>
</feature>
<feature type="compositionally biased region" description="Acidic residues" evidence="2">
    <location>
        <begin position="68"/>
        <end position="82"/>
    </location>
</feature>
<feature type="binding site" evidence="1">
    <location>
        <begin position="301"/>
        <end position="308"/>
    </location>
    <ligand>
        <name>GTP</name>
        <dbReference type="ChEBI" id="CHEBI:37565"/>
    </ligand>
</feature>
<feature type="binding site" evidence="1">
    <location>
        <position position="308"/>
    </location>
    <ligand>
        <name>Mg(2+)</name>
        <dbReference type="ChEBI" id="CHEBI:18420"/>
    </ligand>
</feature>
<feature type="binding site" evidence="1">
    <location>
        <begin position="327"/>
        <end position="331"/>
    </location>
    <ligand>
        <name>GTP</name>
        <dbReference type="ChEBI" id="CHEBI:37565"/>
    </ligand>
</feature>
<feature type="binding site" evidence="1">
    <location>
        <position position="329"/>
    </location>
    <ligand>
        <name>Mg(2+)</name>
        <dbReference type="ChEBI" id="CHEBI:18420"/>
    </ligand>
</feature>
<feature type="binding site" evidence="1">
    <location>
        <begin position="349"/>
        <end position="352"/>
    </location>
    <ligand>
        <name>GTP</name>
        <dbReference type="ChEBI" id="CHEBI:37565"/>
    </ligand>
</feature>
<feature type="binding site" evidence="1">
    <location>
        <begin position="418"/>
        <end position="421"/>
    </location>
    <ligand>
        <name>GTP</name>
        <dbReference type="ChEBI" id="CHEBI:37565"/>
    </ligand>
</feature>
<feature type="binding site" evidence="1">
    <location>
        <begin position="437"/>
        <end position="439"/>
    </location>
    <ligand>
        <name>GTP</name>
        <dbReference type="ChEBI" id="CHEBI:37565"/>
    </ligand>
</feature>
<feature type="sequence conflict" description="In Ref. 2; CAA74749." evidence="4" ref="2">
    <original>D</original>
    <variation>E</variation>
    <location>
        <position position="60"/>
    </location>
</feature>
<feature type="sequence conflict" description="In Ref. 3; BAD97132." evidence="4" ref="3">
    <original>G</original>
    <variation>R</variation>
    <location>
        <position position="61"/>
    </location>
</feature>
<feature type="sequence conflict" description="In Ref. 2; CAA74749." evidence="4" ref="2">
    <original>G</original>
    <variation>E</variation>
    <location>
        <position position="67"/>
    </location>
</feature>
<feature type="sequence conflict" description="In Ref. 2; CAA74749." evidence="4" ref="2">
    <original>E</original>
    <variation>K</variation>
    <location>
        <position position="70"/>
    </location>
</feature>
<feature type="sequence conflict" description="In Ref. 4; AAH14636, 5; AAP36024 and 2; CAA74749." evidence="4" ref="4 5 2">
    <original>I</original>
    <variation>V</variation>
    <location>
        <position position="171"/>
    </location>
</feature>
<keyword id="KW-0002">3D-structure</keyword>
<keyword id="KW-0342">GTP-binding</keyword>
<keyword id="KW-0460">Magnesium</keyword>
<keyword id="KW-0479">Metal-binding</keyword>
<keyword id="KW-0547">Nucleotide-binding</keyword>
<keyword id="KW-1267">Proteomics identification</keyword>
<keyword id="KW-1185">Reference proteome</keyword>
<gene>
    <name type="primary">GTPBP6</name>
    <name type="synonym">PGPL</name>
</gene>
<protein>
    <recommendedName>
        <fullName>Putative GTP-binding protein 6</fullName>
    </recommendedName>
    <alternativeName>
        <fullName>Pseudoautosomal GTP-binding protein-like</fullName>
    </alternativeName>
</protein>
<dbReference type="EMBL" id="AC126759">
    <property type="status" value="NOT_ANNOTATED_CDS"/>
    <property type="molecule type" value="Genomic_DNA"/>
</dbReference>
<dbReference type="EMBL" id="BX000483">
    <property type="status" value="NOT_ANNOTATED_CDS"/>
    <property type="molecule type" value="Genomic_DNA"/>
</dbReference>
<dbReference type="EMBL" id="FO681518">
    <property type="status" value="NOT_ANNOTATED_CDS"/>
    <property type="molecule type" value="Genomic_DNA"/>
</dbReference>
<dbReference type="EMBL" id="Y14391">
    <property type="protein sequence ID" value="CAA74749.2"/>
    <property type="status" value="ALT_FRAME"/>
    <property type="molecule type" value="mRNA"/>
</dbReference>
<dbReference type="EMBL" id="AK223412">
    <property type="protein sequence ID" value="BAD97132.1"/>
    <property type="status" value="ALT_INIT"/>
    <property type="molecule type" value="mRNA"/>
</dbReference>
<dbReference type="EMBL" id="BC014636">
    <property type="protein sequence ID" value="AAH14636.1"/>
    <property type="status" value="ALT_INIT"/>
    <property type="molecule type" value="mRNA"/>
</dbReference>
<dbReference type="EMBL" id="BT007360">
    <property type="protein sequence ID" value="AAP36024.1"/>
    <property type="molecule type" value="mRNA"/>
</dbReference>
<dbReference type="CCDS" id="CCDS75943.1"/>
<dbReference type="RefSeq" id="NP_036359.3">
    <property type="nucleotide sequence ID" value="NM_012227.4"/>
</dbReference>
<dbReference type="PDB" id="7OF2">
    <property type="method" value="EM"/>
    <property type="resolution" value="2.70 A"/>
    <property type="chains" value="C=1-516"/>
</dbReference>
<dbReference type="PDB" id="7OF4">
    <property type="method" value="EM"/>
    <property type="resolution" value="2.70 A"/>
    <property type="chains" value="C=1-516"/>
</dbReference>
<dbReference type="PDB" id="7OF6">
    <property type="method" value="EM"/>
    <property type="resolution" value="2.60 A"/>
    <property type="chains" value="C=1-516"/>
</dbReference>
<dbReference type="PDBsum" id="7OF2"/>
<dbReference type="PDBsum" id="7OF4"/>
<dbReference type="PDBsum" id="7OF6"/>
<dbReference type="EMDB" id="EMD-12867"/>
<dbReference type="EMDB" id="EMD-12869"/>
<dbReference type="EMDB" id="EMD-12871"/>
<dbReference type="SMR" id="O43824"/>
<dbReference type="BioGRID" id="113858">
    <property type="interactions" value="102"/>
</dbReference>
<dbReference type="FunCoup" id="O43824">
    <property type="interactions" value="446"/>
</dbReference>
<dbReference type="IntAct" id="O43824">
    <property type="interactions" value="33"/>
</dbReference>
<dbReference type="STRING" id="9606.ENSP00000316598"/>
<dbReference type="iPTMnet" id="O43824"/>
<dbReference type="PhosphoSitePlus" id="O43824"/>
<dbReference type="SwissPalm" id="O43824"/>
<dbReference type="BioMuta" id="GTPBP6"/>
<dbReference type="jPOST" id="O43824"/>
<dbReference type="MassIVE" id="O43824"/>
<dbReference type="PaxDb" id="9606-ENSP00000316598"/>
<dbReference type="PeptideAtlas" id="O43824"/>
<dbReference type="ProteomicsDB" id="34343"/>
<dbReference type="ProteomicsDB" id="49190"/>
<dbReference type="Pumba" id="O43824"/>
<dbReference type="Antibodypedia" id="23297">
    <property type="antibodies" value="46 antibodies from 13 providers"/>
</dbReference>
<dbReference type="DNASU" id="8225"/>
<dbReference type="Ensembl" id="ENST00000326153.10">
    <property type="protein sequence ID" value="ENSP00000316598.5"/>
    <property type="gene ID" value="ENSG00000178605.15"/>
</dbReference>
<dbReference type="Ensembl" id="ENST00000711233.1">
    <property type="protein sequence ID" value="ENSP00000518626.1"/>
    <property type="gene ID" value="ENSG00000292358.2"/>
</dbReference>
<dbReference type="Ensembl" id="ENST00000850592.1">
    <property type="protein sequence ID" value="ENSP00000520879.1"/>
    <property type="gene ID" value="ENSG00000178605.15"/>
</dbReference>
<dbReference type="Ensembl" id="ENST00000850822.1">
    <property type="protein sequence ID" value="ENSP00000520931.1"/>
    <property type="gene ID" value="ENSG00000292358.2"/>
</dbReference>
<dbReference type="GeneID" id="8225"/>
<dbReference type="KEGG" id="hsa:8225"/>
<dbReference type="MANE-Select" id="ENST00000326153.10">
    <property type="protein sequence ID" value="ENSP00000316598.5"/>
    <property type="RefSeq nucleotide sequence ID" value="NM_012227.4"/>
    <property type="RefSeq protein sequence ID" value="NP_036359.3"/>
</dbReference>
<dbReference type="AGR" id="HGNC:30189"/>
<dbReference type="CTD" id="8225"/>
<dbReference type="DisGeNET" id="8225"/>
<dbReference type="GeneCards" id="GTPBP6"/>
<dbReference type="HGNC" id="HGNC:30189">
    <property type="gene designation" value="GTPBP6"/>
</dbReference>
<dbReference type="HPA" id="ENSG00000178605">
    <property type="expression patterns" value="Low tissue specificity"/>
</dbReference>
<dbReference type="MIM" id="300124">
    <property type="type" value="gene"/>
</dbReference>
<dbReference type="neXtProt" id="NX_O43824"/>
<dbReference type="OpenTargets" id="ENSG00000178605"/>
<dbReference type="VEuPathDB" id="HostDB:ENSG00000178605"/>
<dbReference type="eggNOG" id="KOG0410">
    <property type="taxonomic scope" value="Eukaryota"/>
</dbReference>
<dbReference type="GeneTree" id="ENSGT00390000001397"/>
<dbReference type="InParanoid" id="O43824"/>
<dbReference type="OMA" id="IDVANKC"/>
<dbReference type="OrthoDB" id="10268034at2759"/>
<dbReference type="PAN-GO" id="O43824">
    <property type="GO annotations" value="2 GO annotations based on evolutionary models"/>
</dbReference>
<dbReference type="PhylomeDB" id="O43824"/>
<dbReference type="TreeFam" id="TF315022"/>
<dbReference type="PathwayCommons" id="O43824"/>
<dbReference type="SignaLink" id="O43824"/>
<dbReference type="BioGRID-ORCS" id="8225">
    <property type="hits" value="28 hits in 204 CRISPR screens"/>
</dbReference>
<dbReference type="ChiTaRS" id="GTPBP6">
    <property type="organism name" value="human"/>
</dbReference>
<dbReference type="GeneWiki" id="GTPBP6"/>
<dbReference type="GenomeRNAi" id="8225"/>
<dbReference type="Pharos" id="O43824">
    <property type="development level" value="Tdark"/>
</dbReference>
<dbReference type="PRO" id="PR:O43824"/>
<dbReference type="Proteomes" id="UP000005640">
    <property type="component" value="Chromosome X"/>
</dbReference>
<dbReference type="Proteomes" id="UP000005640">
    <property type="component" value="Chromosome Y"/>
</dbReference>
<dbReference type="RNAct" id="O43824">
    <property type="molecule type" value="protein"/>
</dbReference>
<dbReference type="Bgee" id="ENSG00000178605">
    <property type="expression patterns" value="Expressed in left ovary and 177 other cell types or tissues"/>
</dbReference>
<dbReference type="GO" id="GO:0005737">
    <property type="term" value="C:cytoplasm"/>
    <property type="evidence" value="ECO:0000318"/>
    <property type="project" value="GO_Central"/>
</dbReference>
<dbReference type="GO" id="GO:0005739">
    <property type="term" value="C:mitochondrion"/>
    <property type="evidence" value="ECO:0006056"/>
    <property type="project" value="FlyBase"/>
</dbReference>
<dbReference type="GO" id="GO:0005525">
    <property type="term" value="F:GTP binding"/>
    <property type="evidence" value="ECO:0000304"/>
    <property type="project" value="ProtInc"/>
</dbReference>
<dbReference type="GO" id="GO:0046872">
    <property type="term" value="F:metal ion binding"/>
    <property type="evidence" value="ECO:0007669"/>
    <property type="project" value="UniProtKB-KW"/>
</dbReference>
<dbReference type="GO" id="GO:0043022">
    <property type="term" value="F:ribosome binding"/>
    <property type="evidence" value="ECO:0000318"/>
    <property type="project" value="GO_Central"/>
</dbReference>
<dbReference type="CDD" id="cd01878">
    <property type="entry name" value="HflX"/>
    <property type="match status" value="1"/>
</dbReference>
<dbReference type="FunFam" id="3.40.50.11060:FF:000002">
    <property type="entry name" value="GTP binding protein 6 (putative)"/>
    <property type="match status" value="1"/>
</dbReference>
<dbReference type="FunFam" id="3.40.50.300:FF:000886">
    <property type="entry name" value="Putative GTP-binding protein 6"/>
    <property type="match status" value="1"/>
</dbReference>
<dbReference type="Gene3D" id="3.40.50.11060">
    <property type="entry name" value="GTPase HflX, N-terminal domain"/>
    <property type="match status" value="1"/>
</dbReference>
<dbReference type="Gene3D" id="3.40.50.300">
    <property type="entry name" value="P-loop containing nucleotide triphosphate hydrolases"/>
    <property type="match status" value="1"/>
</dbReference>
<dbReference type="InterPro" id="IPR030394">
    <property type="entry name" value="G_HFLX_dom"/>
</dbReference>
<dbReference type="InterPro" id="IPR006073">
    <property type="entry name" value="GTP-bd"/>
</dbReference>
<dbReference type="InterPro" id="IPR032305">
    <property type="entry name" value="GTP-bd_M"/>
</dbReference>
<dbReference type="InterPro" id="IPR016496">
    <property type="entry name" value="GTPase_HflX"/>
</dbReference>
<dbReference type="InterPro" id="IPR025121">
    <property type="entry name" value="GTPase_HflX_N"/>
</dbReference>
<dbReference type="InterPro" id="IPR042108">
    <property type="entry name" value="GTPase_HflX_N_sf"/>
</dbReference>
<dbReference type="InterPro" id="IPR027417">
    <property type="entry name" value="P-loop_NTPase"/>
</dbReference>
<dbReference type="NCBIfam" id="TIGR03156">
    <property type="entry name" value="GTP_HflX"/>
    <property type="match status" value="1"/>
</dbReference>
<dbReference type="PANTHER" id="PTHR10229:SF0">
    <property type="entry name" value="GTP-BINDING PROTEIN 6-RELATED"/>
    <property type="match status" value="1"/>
</dbReference>
<dbReference type="PANTHER" id="PTHR10229">
    <property type="entry name" value="GTP-BINDING PROTEIN HFLX"/>
    <property type="match status" value="1"/>
</dbReference>
<dbReference type="Pfam" id="PF16360">
    <property type="entry name" value="GTP-bdg_M"/>
    <property type="match status" value="1"/>
</dbReference>
<dbReference type="Pfam" id="PF13167">
    <property type="entry name" value="GTP-bdg_N"/>
    <property type="match status" value="1"/>
</dbReference>
<dbReference type="Pfam" id="PF01926">
    <property type="entry name" value="MMR_HSR1"/>
    <property type="match status" value="1"/>
</dbReference>
<dbReference type="SUPFAM" id="SSF52540">
    <property type="entry name" value="P-loop containing nucleoside triphosphate hydrolases"/>
    <property type="match status" value="1"/>
</dbReference>
<dbReference type="PROSITE" id="PS51705">
    <property type="entry name" value="G_HFLX"/>
    <property type="match status" value="1"/>
</dbReference>
<accession>O43824</accession>
<accession>H0Y2S1</accession>
<accession>Q53F77</accession>
<accession>Q5HYX8</accession>